<accession>P61811</accession>
<accession>P08112</accession>
<accession>Q15579</accession>
<accession>Q15581</accession>
<name>TGFB2_CHLAE</name>
<sequence>MHYCVLSAFLILHLVTVALSLSTCSTLDMDQFMRKRIEAIRGQILSKLKLTSPPEDYPEPEEVPPEVISIYNSTRDLLQEKASRRAAACERERSDEEYYAKEVYKIDMPPFFPSENAIPPTFYRPYFRIVRFDVSAMEKNASNLVKAEFRVFRLQNPKARVPEQRIELYQILKSKDLTSPTQRYIDSKVVKTRAEGEWLSFDVTDAVHEWLHHKDRNLGFKISLHCPCCTFVPSNNYIIPNKSEELEARFAGIDGTSTYTSGDQKTIKSTRKKNSGKTPHLLLMLLPSYRLESQQTNRRKKRALDAAYCFRNVQDNCCLRPLYIDFKRDLGWKWIHEPKGYNANFCAGACPYLWSSDTQHSRVLSLYNTINPEASASPCCVSQDLEPLTILYYIGKTPKIEQLSNMIVKSCKCS</sequence>
<keyword id="KW-0165">Cleavage on pair of basic residues</keyword>
<keyword id="KW-1015">Disulfide bond</keyword>
<keyword id="KW-0272">Extracellular matrix</keyword>
<keyword id="KW-0325">Glycoprotein</keyword>
<keyword id="KW-0339">Growth factor</keyword>
<keyword id="KW-0497">Mitogen</keyword>
<keyword id="KW-0964">Secreted</keyword>
<keyword id="KW-0732">Signal</keyword>
<feature type="signal peptide" evidence="5">
    <location>
        <begin position="1"/>
        <end position="19"/>
    </location>
</feature>
<feature type="chain" id="PRO_0000456179" description="Transforming growth factor beta-2 proprotein">
    <location>
        <begin position="20"/>
        <end position="414"/>
    </location>
</feature>
<feature type="chain" id="PRO_0000445553" description="Latency-associated peptide" evidence="4">
    <location>
        <begin position="20"/>
        <end position="302"/>
    </location>
</feature>
<feature type="chain" id="PRO_0000033783" description="Transforming growth factor beta-2" evidence="4">
    <location>
        <begin position="303"/>
        <end position="414"/>
    </location>
</feature>
<feature type="glycosylation site" description="N-linked (GlcNAc...) asparagine" evidence="5">
    <location>
        <position position="72"/>
    </location>
</feature>
<feature type="glycosylation site" description="N-linked (GlcNAc...) asparagine" evidence="5">
    <location>
        <position position="140"/>
    </location>
</feature>
<feature type="glycosylation site" description="N-linked (GlcNAc...) asparagine" evidence="5">
    <location>
        <position position="241"/>
    </location>
</feature>
<feature type="disulfide bond" evidence="4">
    <location>
        <begin position="309"/>
        <end position="318"/>
    </location>
</feature>
<feature type="disulfide bond" evidence="4">
    <location>
        <begin position="317"/>
        <end position="380"/>
    </location>
</feature>
<feature type="disulfide bond" evidence="4">
    <location>
        <begin position="346"/>
        <end position="411"/>
    </location>
</feature>
<feature type="disulfide bond" evidence="4">
    <location>
        <begin position="350"/>
        <end position="413"/>
    </location>
</feature>
<feature type="disulfide bond" description="Interchain" evidence="4">
    <location>
        <position position="379"/>
    </location>
</feature>
<protein>
    <recommendedName>
        <fullName>Transforming growth factor beta-2 proprotein</fullName>
    </recommendedName>
    <alternativeName>
        <fullName evidence="6">BSC-1 cell growth inhibitor</fullName>
    </alternativeName>
    <alternativeName>
        <fullName evidence="6">Polyergin</fullName>
    </alternativeName>
    <component>
        <recommendedName>
            <fullName>Latency-associated peptide</fullName>
            <shortName>LAP</shortName>
        </recommendedName>
    </component>
    <component>
        <recommendedName>
            <fullName>Transforming growth factor beta-2</fullName>
            <shortName>TGF-beta-2</shortName>
        </recommendedName>
    </component>
</protein>
<dbReference type="EMBL" id="J03585">
    <property type="protein sequence ID" value="AAA35358.1"/>
    <property type="molecule type" value="mRNA"/>
</dbReference>
<dbReference type="PIR" id="A34005">
    <property type="entry name" value="WFMKB2"/>
</dbReference>
<dbReference type="SMR" id="P61811"/>
<dbReference type="GlyCosmos" id="P61811">
    <property type="glycosylation" value="3 sites, No reported glycans"/>
</dbReference>
<dbReference type="GO" id="GO:0030424">
    <property type="term" value="C:axon"/>
    <property type="evidence" value="ECO:0000250"/>
    <property type="project" value="UniProtKB"/>
</dbReference>
<dbReference type="GO" id="GO:0031012">
    <property type="term" value="C:extracellular matrix"/>
    <property type="evidence" value="ECO:0000250"/>
    <property type="project" value="UniProtKB"/>
</dbReference>
<dbReference type="GO" id="GO:0005576">
    <property type="term" value="C:extracellular region"/>
    <property type="evidence" value="ECO:0000250"/>
    <property type="project" value="UniProtKB"/>
</dbReference>
<dbReference type="GO" id="GO:0005615">
    <property type="term" value="C:extracellular space"/>
    <property type="evidence" value="ECO:0000250"/>
    <property type="project" value="AgBase"/>
</dbReference>
<dbReference type="GO" id="GO:0043025">
    <property type="term" value="C:neuronal cell body"/>
    <property type="evidence" value="ECO:0000250"/>
    <property type="project" value="UniProtKB"/>
</dbReference>
<dbReference type="GO" id="GO:0001540">
    <property type="term" value="F:amyloid-beta binding"/>
    <property type="evidence" value="ECO:0000250"/>
    <property type="project" value="UniProtKB"/>
</dbReference>
<dbReference type="GO" id="GO:0005125">
    <property type="term" value="F:cytokine activity"/>
    <property type="evidence" value="ECO:0007669"/>
    <property type="project" value="TreeGrafter"/>
</dbReference>
<dbReference type="GO" id="GO:0008083">
    <property type="term" value="F:growth factor activity"/>
    <property type="evidence" value="ECO:0007669"/>
    <property type="project" value="UniProtKB-KW"/>
</dbReference>
<dbReference type="GO" id="GO:0042803">
    <property type="term" value="F:protein homodimerization activity"/>
    <property type="evidence" value="ECO:0000250"/>
    <property type="project" value="UniProtKB"/>
</dbReference>
<dbReference type="GO" id="GO:0005102">
    <property type="term" value="F:signaling receptor binding"/>
    <property type="evidence" value="ECO:0000250"/>
    <property type="project" value="UniProtKB"/>
</dbReference>
<dbReference type="GO" id="GO:0005160">
    <property type="term" value="F:transforming growth factor beta receptor binding"/>
    <property type="evidence" value="ECO:0000250"/>
    <property type="project" value="UniProtKB"/>
</dbReference>
<dbReference type="GO" id="GO:0005114">
    <property type="term" value="F:type II transforming growth factor beta receptor binding"/>
    <property type="evidence" value="ECO:0000250"/>
    <property type="project" value="UniProtKB"/>
</dbReference>
<dbReference type="GO" id="GO:0034714">
    <property type="term" value="F:type III transforming growth factor beta receptor binding"/>
    <property type="evidence" value="ECO:0000250"/>
    <property type="project" value="AgBase"/>
</dbReference>
<dbReference type="GO" id="GO:0060317">
    <property type="term" value="P:cardiac epithelial to mesenchymal transition"/>
    <property type="evidence" value="ECO:0000250"/>
    <property type="project" value="UniProtKB"/>
</dbReference>
<dbReference type="GO" id="GO:0060038">
    <property type="term" value="P:cardiac muscle cell proliferation"/>
    <property type="evidence" value="ECO:0000250"/>
    <property type="project" value="UniProtKB"/>
</dbReference>
<dbReference type="GO" id="GO:0010002">
    <property type="term" value="P:cardioblast differentiation"/>
    <property type="evidence" value="ECO:0000250"/>
    <property type="project" value="UniProtKB"/>
</dbReference>
<dbReference type="GO" id="GO:0016477">
    <property type="term" value="P:cell migration"/>
    <property type="evidence" value="ECO:0000250"/>
    <property type="project" value="UniProtKB"/>
</dbReference>
<dbReference type="GO" id="GO:0000902">
    <property type="term" value="P:cell morphogenesis"/>
    <property type="evidence" value="ECO:0000250"/>
    <property type="project" value="UniProtKB"/>
</dbReference>
<dbReference type="GO" id="GO:0045216">
    <property type="term" value="P:cell-cell junction organization"/>
    <property type="evidence" value="ECO:0000250"/>
    <property type="project" value="UniProtKB"/>
</dbReference>
<dbReference type="GO" id="GO:0030199">
    <property type="term" value="P:collagen fibril organization"/>
    <property type="evidence" value="ECO:0000250"/>
    <property type="project" value="UniProtKB"/>
</dbReference>
<dbReference type="GO" id="GO:0042416">
    <property type="term" value="P:dopamine biosynthetic process"/>
    <property type="evidence" value="ECO:0000250"/>
    <property type="project" value="UniProtKB"/>
</dbReference>
<dbReference type="GO" id="GO:0048566">
    <property type="term" value="P:embryonic digestive tract development"/>
    <property type="evidence" value="ECO:0000250"/>
    <property type="project" value="AgBase"/>
</dbReference>
<dbReference type="GO" id="GO:0030855">
    <property type="term" value="P:epithelial cell differentiation"/>
    <property type="evidence" value="ECO:0000250"/>
    <property type="project" value="UniProtKB"/>
</dbReference>
<dbReference type="GO" id="GO:0001837">
    <property type="term" value="P:epithelial to mesenchymal transition"/>
    <property type="evidence" value="ECO:0000250"/>
    <property type="project" value="UniProtKB"/>
</dbReference>
<dbReference type="GO" id="GO:0097191">
    <property type="term" value="P:extrinsic apoptotic signaling pathway"/>
    <property type="evidence" value="ECO:0000250"/>
    <property type="project" value="UniProtKB"/>
</dbReference>
<dbReference type="GO" id="GO:0001654">
    <property type="term" value="P:eye development"/>
    <property type="evidence" value="ECO:0000250"/>
    <property type="project" value="UniProtKB"/>
</dbReference>
<dbReference type="GO" id="GO:0008347">
    <property type="term" value="P:glial cell migration"/>
    <property type="evidence" value="ECO:0000250"/>
    <property type="project" value="UniProtKB"/>
</dbReference>
<dbReference type="GO" id="GO:0001942">
    <property type="term" value="P:hair follicle development"/>
    <property type="evidence" value="ECO:0000250"/>
    <property type="project" value="UniProtKB"/>
</dbReference>
<dbReference type="GO" id="GO:0031069">
    <property type="term" value="P:hair follicle morphogenesis"/>
    <property type="evidence" value="ECO:0000250"/>
    <property type="project" value="UniProtKB"/>
</dbReference>
<dbReference type="GO" id="GO:0007507">
    <property type="term" value="P:heart development"/>
    <property type="evidence" value="ECO:0000250"/>
    <property type="project" value="UniProtKB"/>
</dbReference>
<dbReference type="GO" id="GO:0003007">
    <property type="term" value="P:heart morphogenesis"/>
    <property type="evidence" value="ECO:0000250"/>
    <property type="project" value="UniProtKB"/>
</dbReference>
<dbReference type="GO" id="GO:0030097">
    <property type="term" value="P:hemopoiesis"/>
    <property type="evidence" value="ECO:0000250"/>
    <property type="project" value="UniProtKB"/>
</dbReference>
<dbReference type="GO" id="GO:0030308">
    <property type="term" value="P:negative regulation of cell growth"/>
    <property type="evidence" value="ECO:0000250"/>
    <property type="project" value="AgBase"/>
</dbReference>
<dbReference type="GO" id="GO:0008285">
    <property type="term" value="P:negative regulation of cell population proliferation"/>
    <property type="evidence" value="ECO:0000250"/>
    <property type="project" value="UniProtKB"/>
</dbReference>
<dbReference type="GO" id="GO:0050680">
    <property type="term" value="P:negative regulation of epithelial cell proliferation"/>
    <property type="evidence" value="ECO:0000250"/>
    <property type="project" value="UniProtKB"/>
</dbReference>
<dbReference type="GO" id="GO:0010936">
    <property type="term" value="P:negative regulation of macrophage cytokine production"/>
    <property type="evidence" value="ECO:0000250"/>
    <property type="project" value="UniProtKB"/>
</dbReference>
<dbReference type="GO" id="GO:0048666">
    <property type="term" value="P:neuron development"/>
    <property type="evidence" value="ECO:0000250"/>
    <property type="project" value="UniProtKB"/>
</dbReference>
<dbReference type="GO" id="GO:0030593">
    <property type="term" value="P:neutrophil chemotaxis"/>
    <property type="evidence" value="ECO:0000250"/>
    <property type="project" value="UniProtKB"/>
</dbReference>
<dbReference type="GO" id="GO:0051891">
    <property type="term" value="P:positive regulation of cardioblast differentiation"/>
    <property type="evidence" value="ECO:0000250"/>
    <property type="project" value="UniProtKB"/>
</dbReference>
<dbReference type="GO" id="GO:0033630">
    <property type="term" value="P:positive regulation of cell adhesion mediated by integrin"/>
    <property type="evidence" value="ECO:0000250"/>
    <property type="project" value="UniProtKB"/>
</dbReference>
<dbReference type="GO" id="GO:0045787">
    <property type="term" value="P:positive regulation of cell cycle"/>
    <property type="evidence" value="ECO:0000250"/>
    <property type="project" value="UniProtKB"/>
</dbReference>
<dbReference type="GO" id="GO:0051781">
    <property type="term" value="P:positive regulation of cell division"/>
    <property type="evidence" value="ECO:0007669"/>
    <property type="project" value="UniProtKB-KW"/>
</dbReference>
<dbReference type="GO" id="GO:0030307">
    <property type="term" value="P:positive regulation of cell growth"/>
    <property type="evidence" value="ECO:0000250"/>
    <property type="project" value="UniProtKB"/>
</dbReference>
<dbReference type="GO" id="GO:0008284">
    <property type="term" value="P:positive regulation of cell population proliferation"/>
    <property type="evidence" value="ECO:0000250"/>
    <property type="project" value="UniProtKB"/>
</dbReference>
<dbReference type="GO" id="GO:0010634">
    <property type="term" value="P:positive regulation of epithelial cell migration"/>
    <property type="evidence" value="ECO:0000250"/>
    <property type="project" value="UniProtKB"/>
</dbReference>
<dbReference type="GO" id="GO:0010718">
    <property type="term" value="P:positive regulation of epithelial to mesenchymal transition"/>
    <property type="evidence" value="ECO:0000250"/>
    <property type="project" value="UniProtKB"/>
</dbReference>
<dbReference type="GO" id="GO:0045823">
    <property type="term" value="P:positive regulation of heart contraction"/>
    <property type="evidence" value="ECO:0000250"/>
    <property type="project" value="UniProtKB"/>
</dbReference>
<dbReference type="GO" id="GO:0050778">
    <property type="term" value="P:positive regulation of immune response"/>
    <property type="evidence" value="ECO:0000250"/>
    <property type="project" value="UniProtKB"/>
</dbReference>
<dbReference type="GO" id="GO:0045726">
    <property type="term" value="P:positive regulation of integrin biosynthetic process"/>
    <property type="evidence" value="ECO:0000250"/>
    <property type="project" value="UniProtKB"/>
</dbReference>
<dbReference type="GO" id="GO:0043525">
    <property type="term" value="P:positive regulation of neuron apoptotic process"/>
    <property type="evidence" value="ECO:0000250"/>
    <property type="project" value="UniProtKB"/>
</dbReference>
<dbReference type="GO" id="GO:0051897">
    <property type="term" value="P:positive regulation of phosphatidylinositol 3-kinase/protein kinase B signal transduction"/>
    <property type="evidence" value="ECO:0000250"/>
    <property type="project" value="UniProtKB"/>
</dbReference>
<dbReference type="GO" id="GO:0050714">
    <property type="term" value="P:positive regulation of protein secretion"/>
    <property type="evidence" value="ECO:0000250"/>
    <property type="project" value="UniProtKB"/>
</dbReference>
<dbReference type="GO" id="GO:0060391">
    <property type="term" value="P:positive regulation of SMAD protein signal transduction"/>
    <property type="evidence" value="ECO:0000250"/>
    <property type="project" value="UniProtKB"/>
</dbReference>
<dbReference type="GO" id="GO:0032874">
    <property type="term" value="P:positive regulation of stress-activated MAPK cascade"/>
    <property type="evidence" value="ECO:0000250"/>
    <property type="project" value="UniProtKB"/>
</dbReference>
<dbReference type="GO" id="GO:0051795">
    <property type="term" value="P:positive regulation of timing of catagen"/>
    <property type="evidence" value="ECO:0000250"/>
    <property type="project" value="UniProtKB"/>
</dbReference>
<dbReference type="GO" id="GO:0042127">
    <property type="term" value="P:regulation of cell population proliferation"/>
    <property type="evidence" value="ECO:0000250"/>
    <property type="project" value="UniProtKB"/>
</dbReference>
<dbReference type="GO" id="GO:0051794">
    <property type="term" value="P:regulation of timing of catagen"/>
    <property type="evidence" value="ECO:0000250"/>
    <property type="project" value="UniProtKB"/>
</dbReference>
<dbReference type="GO" id="GO:0032909">
    <property type="term" value="P:regulation of transforming growth factor beta2 production"/>
    <property type="evidence" value="ECO:0000250"/>
    <property type="project" value="UniProtKB"/>
</dbReference>
<dbReference type="GO" id="GO:0001666">
    <property type="term" value="P:response to hypoxia"/>
    <property type="evidence" value="ECO:0000250"/>
    <property type="project" value="UniProtKB"/>
</dbReference>
<dbReference type="GO" id="GO:0032570">
    <property type="term" value="P:response to progesterone"/>
    <property type="evidence" value="ECO:0000250"/>
    <property type="project" value="UniProtKB"/>
</dbReference>
<dbReference type="GO" id="GO:0009611">
    <property type="term" value="P:response to wounding"/>
    <property type="evidence" value="ECO:0000250"/>
    <property type="project" value="AgBase"/>
</dbReference>
<dbReference type="GO" id="GO:0007435">
    <property type="term" value="P:salivary gland morphogenesis"/>
    <property type="evidence" value="ECO:0000250"/>
    <property type="project" value="AgBase"/>
</dbReference>
<dbReference type="GO" id="GO:0023052">
    <property type="term" value="P:signaling"/>
    <property type="evidence" value="ECO:0000250"/>
    <property type="project" value="UniProtKB"/>
</dbReference>
<dbReference type="GO" id="GO:0048103">
    <property type="term" value="P:somatic stem cell division"/>
    <property type="evidence" value="ECO:0000250"/>
    <property type="project" value="UniProtKB"/>
</dbReference>
<dbReference type="GO" id="GO:0007179">
    <property type="term" value="P:transforming growth factor beta receptor signaling pathway"/>
    <property type="evidence" value="ECO:0000250"/>
    <property type="project" value="UniProtKB"/>
</dbReference>
<dbReference type="GO" id="GO:0042060">
    <property type="term" value="P:wound healing"/>
    <property type="evidence" value="ECO:0000250"/>
    <property type="project" value="UniProtKB"/>
</dbReference>
<dbReference type="CDD" id="cd19385">
    <property type="entry name" value="TGF_beta_TGFB2"/>
    <property type="match status" value="1"/>
</dbReference>
<dbReference type="FunFam" id="2.10.90.10:FF:000004">
    <property type="entry name" value="Transforming growth factor beta"/>
    <property type="match status" value="1"/>
</dbReference>
<dbReference type="FunFam" id="2.60.120.970:FF:000002">
    <property type="entry name" value="Transforming growth factor beta"/>
    <property type="match status" value="1"/>
</dbReference>
<dbReference type="Gene3D" id="2.60.120.970">
    <property type="match status" value="1"/>
</dbReference>
<dbReference type="Gene3D" id="2.10.90.10">
    <property type="entry name" value="Cystine-knot cytokines"/>
    <property type="match status" value="1"/>
</dbReference>
<dbReference type="InterPro" id="IPR029034">
    <property type="entry name" value="Cystine-knot_cytokine"/>
</dbReference>
<dbReference type="InterPro" id="IPR001839">
    <property type="entry name" value="TGF-b_C"/>
</dbReference>
<dbReference type="InterPro" id="IPR001111">
    <property type="entry name" value="TGF-b_propeptide"/>
</dbReference>
<dbReference type="InterPro" id="IPR016319">
    <property type="entry name" value="TGF-beta"/>
</dbReference>
<dbReference type="InterPro" id="IPR015615">
    <property type="entry name" value="TGF-beta-rel"/>
</dbReference>
<dbReference type="InterPro" id="IPR003940">
    <property type="entry name" value="TGFb2"/>
</dbReference>
<dbReference type="InterPro" id="IPR017948">
    <property type="entry name" value="TGFb_CS"/>
</dbReference>
<dbReference type="PANTHER" id="PTHR11848">
    <property type="entry name" value="TGF-BETA FAMILY"/>
    <property type="match status" value="1"/>
</dbReference>
<dbReference type="PANTHER" id="PTHR11848:SF141">
    <property type="entry name" value="TRANSFORMING GROWTH FACTOR BETA-2 PROPROTEIN"/>
    <property type="match status" value="1"/>
</dbReference>
<dbReference type="Pfam" id="PF00019">
    <property type="entry name" value="TGF_beta"/>
    <property type="match status" value="1"/>
</dbReference>
<dbReference type="Pfam" id="PF00688">
    <property type="entry name" value="TGFb_propeptide"/>
    <property type="match status" value="1"/>
</dbReference>
<dbReference type="PIRSF" id="PIRSF001787">
    <property type="entry name" value="TGF-beta"/>
    <property type="match status" value="1"/>
</dbReference>
<dbReference type="PRINTS" id="PR01423">
    <property type="entry name" value="TGFBETA"/>
</dbReference>
<dbReference type="PRINTS" id="PR01425">
    <property type="entry name" value="TGFBETA2"/>
</dbReference>
<dbReference type="SMART" id="SM00204">
    <property type="entry name" value="TGFB"/>
    <property type="match status" value="1"/>
</dbReference>
<dbReference type="SUPFAM" id="SSF57501">
    <property type="entry name" value="Cystine-knot cytokines"/>
    <property type="match status" value="1"/>
</dbReference>
<dbReference type="PROSITE" id="PS00250">
    <property type="entry name" value="TGF_BETA_1"/>
    <property type="match status" value="1"/>
</dbReference>
<dbReference type="PROSITE" id="PS51362">
    <property type="entry name" value="TGF_BETA_2"/>
    <property type="match status" value="1"/>
</dbReference>
<evidence type="ECO:0000250" key="1">
    <source>
        <dbReference type="UniProtKB" id="P01137"/>
    </source>
</evidence>
<evidence type="ECO:0000250" key="2">
    <source>
        <dbReference type="UniProtKB" id="P04202"/>
    </source>
</evidence>
<evidence type="ECO:0000250" key="3">
    <source>
        <dbReference type="UniProtKB" id="P27090"/>
    </source>
</evidence>
<evidence type="ECO:0000250" key="4">
    <source>
        <dbReference type="UniProtKB" id="P61812"/>
    </source>
</evidence>
<evidence type="ECO:0000255" key="5"/>
<evidence type="ECO:0000303" key="6">
    <source>
    </source>
</evidence>
<evidence type="ECO:0000305" key="7"/>
<comment type="function">
    <molecule>Transforming growth factor beta-2 proprotein</molecule>
    <text evidence="1 2">Precursor of the Latency-associated peptide (LAP) and Transforming growth factor beta-2 (TGF-beta-2) chains, which constitute the regulatory and active subunit of TGF-beta-2, respectively.</text>
</comment>
<comment type="function">
    <molecule>Latency-associated peptide</molecule>
    <text evidence="1 2">Required to maintain the Transforming growth factor beta-2 (TGF-beta-2) chain in a latent state during storage in extracellular matrix. Associates non-covalently with TGF-beta-2 and regulates its activation via interaction with 'milieu molecules', such as LTBP1 and LRRC32/GARP, that control activation of TGF-beta-2.</text>
</comment>
<comment type="function">
    <molecule>Transforming growth factor beta-2</molecule>
    <text evidence="1 2 4">Multifunctional protein that regulates various processes such as angiogenesis and heart development (By similarity). Activation into mature form follows different steps: following cleavage of the proprotein in the Golgi apparatus, Latency-associated peptide (LAP) and Transforming growth factor beta-2 (TGF-beta-2) chains remain non-covalently linked rendering TGF-beta-2 inactive during storage in extracellular matrix (By similarity). At the same time, LAP chain interacts with 'milieu molecules', such as LTBP1 and LRRC32/GARP, that control activation of TGF-beta-2 and maintain it in a latent state during storage in extracellular milieus (By similarity). Once activated following release of LAP, TGF-beta-2 acts by binding to TGF-beta receptors (TGFBR1 and TGFBR2), which transduce signal (By similarity).</text>
</comment>
<comment type="subunit">
    <text evidence="1 3 4">Interacts with the serine proteases, HTRA1 and HTRA3 (By similarity). Interacts with ASPN (By similarity). Interacts with MFAP5 (By similarity).</text>
</comment>
<comment type="subunit">
    <molecule>Latency-associated peptide</molecule>
    <text evidence="1 3 4">Interacts with Transforming growth factor beta-2 (TGF-beta-2) chain; interaction is non-covalent and maintains (TGF-beta-2) in a latent state (By similarity). Interacts with LRRC32/GARP; leading to regulate activation of TGF-beta-2 (By similarity). Interacts with NREP; the interaction results in a decrease in TGFB2 autoinduction (By similarity).</text>
</comment>
<comment type="subunit">
    <molecule>Transforming growth factor beta-2</molecule>
    <text evidence="1 3 4">Transforming growth factor beta-2: Homodimer; disulfide-linked (By similarity). Transforming growth factor beta-2: Interacts with TGF-beta receptors (TGFBR1 and TGFBR2), leading to signal transduction (By similarity).</text>
</comment>
<comment type="subcellular location">
    <molecule>Latency-associated peptide</molecule>
    <subcellularLocation>
        <location evidence="1">Secreted</location>
        <location evidence="1">Extracellular space</location>
        <location evidence="1">Extracellular matrix</location>
    </subcellularLocation>
</comment>
<comment type="subcellular location">
    <molecule>Transforming growth factor beta-2</molecule>
    <subcellularLocation>
        <location evidence="1">Secreted</location>
    </subcellularLocation>
</comment>
<comment type="PTM">
    <molecule>Transforming growth factor beta-2</molecule>
    <text evidence="1">The precursor proprotein is cleaved in the Golgi apparatus to form Transforming growth factor beta-2 (TGF-beta-2) and Latency-associated peptide (LAP) chains, which remain non-covalently linked, rendering TGF-beta-2 inactive.</text>
</comment>
<comment type="similarity">
    <text evidence="7">Belongs to the TGF-beta family.</text>
</comment>
<proteinExistence type="evidence at transcript level"/>
<reference key="1">
    <citation type="journal article" date="1988" name="Proc. Natl. Acad. Sci. U.S.A.">
        <title>Amino acid sequence of the BSC-1 cell growth inhibitor (polyergin) deduced from the nucleotide sequence of the cDNA.</title>
        <authorList>
            <person name="Hanks S."/>
            <person name="Armour R."/>
            <person name="Baldwin J.H."/>
            <person name="Maldonado F."/>
            <person name="Spiess J."/>
            <person name="Holley R.W."/>
        </authorList>
    </citation>
    <scope>NUCLEOTIDE SEQUENCE [MRNA]</scope>
</reference>
<gene>
    <name type="primary">TGFB2</name>
</gene>
<organism>
    <name type="scientific">Chlorocebus aethiops</name>
    <name type="common">Green monkey</name>
    <name type="synonym">Cercopithecus aethiops</name>
    <dbReference type="NCBI Taxonomy" id="9534"/>
    <lineage>
        <taxon>Eukaryota</taxon>
        <taxon>Metazoa</taxon>
        <taxon>Chordata</taxon>
        <taxon>Craniata</taxon>
        <taxon>Vertebrata</taxon>
        <taxon>Euteleostomi</taxon>
        <taxon>Mammalia</taxon>
        <taxon>Eutheria</taxon>
        <taxon>Euarchontoglires</taxon>
        <taxon>Primates</taxon>
        <taxon>Haplorrhini</taxon>
        <taxon>Catarrhini</taxon>
        <taxon>Cercopithecidae</taxon>
        <taxon>Cercopithecinae</taxon>
        <taxon>Chlorocebus</taxon>
    </lineage>
</organism>